<gene>
    <name evidence="1" type="primary">smpB</name>
    <name type="ordered locus">tll1927</name>
</gene>
<feature type="chain" id="PRO_0000103050" description="SsrA-binding protein">
    <location>
        <begin position="1"/>
        <end position="152"/>
    </location>
</feature>
<feature type="region of interest" description="Disordered" evidence="2">
    <location>
        <begin position="130"/>
        <end position="152"/>
    </location>
</feature>
<feature type="compositionally biased region" description="Basic and acidic residues" evidence="2">
    <location>
        <begin position="132"/>
        <end position="152"/>
    </location>
</feature>
<protein>
    <recommendedName>
        <fullName evidence="1">SsrA-binding protein</fullName>
    </recommendedName>
    <alternativeName>
        <fullName evidence="1">Small protein B</fullName>
    </alternativeName>
</protein>
<name>SSRP_THEVB</name>
<accession>Q8DHM0</accession>
<comment type="function">
    <text evidence="1">Required for rescue of stalled ribosomes mediated by trans-translation. Binds to transfer-messenger RNA (tmRNA), required for stable association of tmRNA with ribosomes. tmRNA and SmpB together mimic tRNA shape, replacing the anticodon stem-loop with SmpB. tmRNA is encoded by the ssrA gene; the 2 termini fold to resemble tRNA(Ala) and it encodes a 'tag peptide', a short internal open reading frame. During trans-translation Ala-aminoacylated tmRNA acts like a tRNA, entering the A-site of stalled ribosomes, displacing the stalled mRNA. The ribosome then switches to translate the ORF on the tmRNA; the nascent peptide is terminated with the 'tag peptide' encoded by the tmRNA and targeted for degradation. The ribosome is freed to recommence translation, which seems to be the essential function of trans-translation.</text>
</comment>
<comment type="subcellular location">
    <subcellularLocation>
        <location evidence="1">Cytoplasm</location>
    </subcellularLocation>
    <text evidence="1">The tmRNA-SmpB complex associates with stalled 70S ribosomes.</text>
</comment>
<comment type="similarity">
    <text evidence="1">Belongs to the SmpB family.</text>
</comment>
<proteinExistence type="inferred from homology"/>
<evidence type="ECO:0000255" key="1">
    <source>
        <dbReference type="HAMAP-Rule" id="MF_00023"/>
    </source>
</evidence>
<evidence type="ECO:0000256" key="2">
    <source>
        <dbReference type="SAM" id="MobiDB-lite"/>
    </source>
</evidence>
<organism>
    <name type="scientific">Thermosynechococcus vestitus (strain NIES-2133 / IAM M-273 / BP-1)</name>
    <dbReference type="NCBI Taxonomy" id="197221"/>
    <lineage>
        <taxon>Bacteria</taxon>
        <taxon>Bacillati</taxon>
        <taxon>Cyanobacteriota</taxon>
        <taxon>Cyanophyceae</taxon>
        <taxon>Acaryochloridales</taxon>
        <taxon>Thermosynechococcaceae</taxon>
        <taxon>Thermosynechococcus</taxon>
    </lineage>
</organism>
<reference key="1">
    <citation type="journal article" date="2002" name="DNA Res.">
        <title>Complete genome structure of the thermophilic cyanobacterium Thermosynechococcus elongatus BP-1.</title>
        <authorList>
            <person name="Nakamura Y."/>
            <person name="Kaneko T."/>
            <person name="Sato S."/>
            <person name="Ikeuchi M."/>
            <person name="Katoh H."/>
            <person name="Sasamoto S."/>
            <person name="Watanabe A."/>
            <person name="Iriguchi M."/>
            <person name="Kawashima K."/>
            <person name="Kimura T."/>
            <person name="Kishida Y."/>
            <person name="Kiyokawa C."/>
            <person name="Kohara M."/>
            <person name="Matsumoto M."/>
            <person name="Matsuno A."/>
            <person name="Nakazaki N."/>
            <person name="Shimpo S."/>
            <person name="Sugimoto M."/>
            <person name="Takeuchi C."/>
            <person name="Yamada M."/>
            <person name="Tabata S."/>
        </authorList>
    </citation>
    <scope>NUCLEOTIDE SEQUENCE [LARGE SCALE GENOMIC DNA]</scope>
    <source>
        <strain>NIES-2133 / IAM M-273 / BP-1</strain>
    </source>
</reference>
<keyword id="KW-0963">Cytoplasm</keyword>
<keyword id="KW-1185">Reference proteome</keyword>
<keyword id="KW-0694">RNA-binding</keyword>
<sequence>MGDSIKVLSENRQARFQYEILETYECGLVLLGTEVKSIRAGKVNLRDGFARIRNGEAWLMNVHISPHESTNPSYNHDPLRDRKLLLHKQEIRKLVGKVEQKGLTLVPLKLYLKNGRVKVSLGLARGKKLHDKRQDLKQRQDKREMERAMKQR</sequence>
<dbReference type="EMBL" id="BA000039">
    <property type="protein sequence ID" value="BAC09479.1"/>
    <property type="molecule type" value="Genomic_DNA"/>
</dbReference>
<dbReference type="RefSeq" id="NP_682717.1">
    <property type="nucleotide sequence ID" value="NC_004113.1"/>
</dbReference>
<dbReference type="RefSeq" id="WP_011057764.1">
    <property type="nucleotide sequence ID" value="NC_004113.1"/>
</dbReference>
<dbReference type="SMR" id="Q8DHM0"/>
<dbReference type="STRING" id="197221.gene:10748534"/>
<dbReference type="EnsemblBacteria" id="BAC09479">
    <property type="protein sequence ID" value="BAC09479"/>
    <property type="gene ID" value="BAC09479"/>
</dbReference>
<dbReference type="KEGG" id="tel:tll1927"/>
<dbReference type="PATRIC" id="fig|197221.4.peg.2016"/>
<dbReference type="eggNOG" id="COG0691">
    <property type="taxonomic scope" value="Bacteria"/>
</dbReference>
<dbReference type="Proteomes" id="UP000000440">
    <property type="component" value="Chromosome"/>
</dbReference>
<dbReference type="GO" id="GO:0005829">
    <property type="term" value="C:cytosol"/>
    <property type="evidence" value="ECO:0007669"/>
    <property type="project" value="TreeGrafter"/>
</dbReference>
<dbReference type="GO" id="GO:0003723">
    <property type="term" value="F:RNA binding"/>
    <property type="evidence" value="ECO:0007669"/>
    <property type="project" value="UniProtKB-UniRule"/>
</dbReference>
<dbReference type="GO" id="GO:0070929">
    <property type="term" value="P:trans-translation"/>
    <property type="evidence" value="ECO:0007669"/>
    <property type="project" value="UniProtKB-UniRule"/>
</dbReference>
<dbReference type="CDD" id="cd09294">
    <property type="entry name" value="SmpB"/>
    <property type="match status" value="1"/>
</dbReference>
<dbReference type="Gene3D" id="2.40.280.10">
    <property type="match status" value="1"/>
</dbReference>
<dbReference type="HAMAP" id="MF_00023">
    <property type="entry name" value="SmpB"/>
    <property type="match status" value="1"/>
</dbReference>
<dbReference type="InterPro" id="IPR023620">
    <property type="entry name" value="SmpB"/>
</dbReference>
<dbReference type="InterPro" id="IPR000037">
    <property type="entry name" value="SsrA-bd_prot"/>
</dbReference>
<dbReference type="InterPro" id="IPR020081">
    <property type="entry name" value="SsrA-bd_prot_CS"/>
</dbReference>
<dbReference type="NCBIfam" id="NF003843">
    <property type="entry name" value="PRK05422.1"/>
    <property type="match status" value="1"/>
</dbReference>
<dbReference type="NCBIfam" id="TIGR00086">
    <property type="entry name" value="smpB"/>
    <property type="match status" value="1"/>
</dbReference>
<dbReference type="PANTHER" id="PTHR30308:SF2">
    <property type="entry name" value="SSRA-BINDING PROTEIN"/>
    <property type="match status" value="1"/>
</dbReference>
<dbReference type="PANTHER" id="PTHR30308">
    <property type="entry name" value="TMRNA-BINDING COMPONENT OF TRANS-TRANSLATION TAGGING COMPLEX"/>
    <property type="match status" value="1"/>
</dbReference>
<dbReference type="Pfam" id="PF01668">
    <property type="entry name" value="SmpB"/>
    <property type="match status" value="1"/>
</dbReference>
<dbReference type="SUPFAM" id="SSF74982">
    <property type="entry name" value="Small protein B (SmpB)"/>
    <property type="match status" value="1"/>
</dbReference>
<dbReference type="PROSITE" id="PS01317">
    <property type="entry name" value="SSRP"/>
    <property type="match status" value="1"/>
</dbReference>